<name>RL9_MYCTO</name>
<protein>
    <recommendedName>
        <fullName evidence="1">Large ribosomal subunit protein bL9</fullName>
    </recommendedName>
    <alternativeName>
        <fullName evidence="2">50S ribosomal protein L9</fullName>
    </alternativeName>
</protein>
<gene>
    <name evidence="1" type="primary">rplI</name>
    <name type="ordered locus">MT0062</name>
</gene>
<evidence type="ECO:0000255" key="1">
    <source>
        <dbReference type="HAMAP-Rule" id="MF_00503"/>
    </source>
</evidence>
<evidence type="ECO:0000305" key="2"/>
<reference key="1">
    <citation type="journal article" date="2002" name="J. Bacteriol.">
        <title>Whole-genome comparison of Mycobacterium tuberculosis clinical and laboratory strains.</title>
        <authorList>
            <person name="Fleischmann R.D."/>
            <person name="Alland D."/>
            <person name="Eisen J.A."/>
            <person name="Carpenter L."/>
            <person name="White O."/>
            <person name="Peterson J.D."/>
            <person name="DeBoy R.T."/>
            <person name="Dodson R.J."/>
            <person name="Gwinn M.L."/>
            <person name="Haft D.H."/>
            <person name="Hickey E.K."/>
            <person name="Kolonay J.F."/>
            <person name="Nelson W.C."/>
            <person name="Umayam L.A."/>
            <person name="Ermolaeva M.D."/>
            <person name="Salzberg S.L."/>
            <person name="Delcher A."/>
            <person name="Utterback T.R."/>
            <person name="Weidman J.F."/>
            <person name="Khouri H.M."/>
            <person name="Gill J."/>
            <person name="Mikula A."/>
            <person name="Bishai W."/>
            <person name="Jacobs W.R. Jr."/>
            <person name="Venter J.C."/>
            <person name="Fraser C.M."/>
        </authorList>
    </citation>
    <scope>NUCLEOTIDE SEQUENCE [LARGE SCALE GENOMIC DNA]</scope>
    <source>
        <strain>CDC 1551 / Oshkosh</strain>
    </source>
</reference>
<accession>P9WH78</accession>
<accession>L0T467</accession>
<accession>P66315</accession>
<accession>P71713</accession>
<keyword id="KW-1185">Reference proteome</keyword>
<keyword id="KW-0687">Ribonucleoprotein</keyword>
<keyword id="KW-0689">Ribosomal protein</keyword>
<keyword id="KW-0694">RNA-binding</keyword>
<keyword id="KW-0699">rRNA-binding</keyword>
<comment type="function">
    <text evidence="1">Binds to the 23S rRNA.</text>
</comment>
<comment type="similarity">
    <text evidence="1">Belongs to the bacterial ribosomal protein bL9 family.</text>
</comment>
<proteinExistence type="inferred from homology"/>
<sequence length="152" mass="16170">MKLILTADVDHLGSIGDTVEVKDGYGRNFLLPRGLAIVASRGAQKQADEIRRARETKSVRDLEHANEIKAAIEALGPIALPVKTSADSGKLFGSVTAADVVAAIKKAGGPNLDKRIVRLPKTHIKAVGTHFVSVHLHPEIDVEVSLDVVAQS</sequence>
<feature type="chain" id="PRO_0000428234" description="Large ribosomal subunit protein bL9">
    <location>
        <begin position="1"/>
        <end position="152"/>
    </location>
</feature>
<organism>
    <name type="scientific">Mycobacterium tuberculosis (strain CDC 1551 / Oshkosh)</name>
    <dbReference type="NCBI Taxonomy" id="83331"/>
    <lineage>
        <taxon>Bacteria</taxon>
        <taxon>Bacillati</taxon>
        <taxon>Actinomycetota</taxon>
        <taxon>Actinomycetes</taxon>
        <taxon>Mycobacteriales</taxon>
        <taxon>Mycobacteriaceae</taxon>
        <taxon>Mycobacterium</taxon>
        <taxon>Mycobacterium tuberculosis complex</taxon>
    </lineage>
</organism>
<dbReference type="EMBL" id="AE000516">
    <property type="protein sequence ID" value="AAK44284.1"/>
    <property type="molecule type" value="Genomic_DNA"/>
</dbReference>
<dbReference type="PIR" id="H70913">
    <property type="entry name" value="H70913"/>
</dbReference>
<dbReference type="RefSeq" id="WP_003400543.1">
    <property type="nucleotide sequence ID" value="NZ_KK341227.1"/>
</dbReference>
<dbReference type="SMR" id="P9WH78"/>
<dbReference type="GeneID" id="45424015"/>
<dbReference type="KEGG" id="mtc:MT0062"/>
<dbReference type="PATRIC" id="fig|83331.31.peg.62"/>
<dbReference type="HOGENOM" id="CLU_078938_5_1_11"/>
<dbReference type="Proteomes" id="UP000001020">
    <property type="component" value="Chromosome"/>
</dbReference>
<dbReference type="GO" id="GO:1990904">
    <property type="term" value="C:ribonucleoprotein complex"/>
    <property type="evidence" value="ECO:0007669"/>
    <property type="project" value="UniProtKB-KW"/>
</dbReference>
<dbReference type="GO" id="GO:0005840">
    <property type="term" value="C:ribosome"/>
    <property type="evidence" value="ECO:0007669"/>
    <property type="project" value="UniProtKB-KW"/>
</dbReference>
<dbReference type="GO" id="GO:0019843">
    <property type="term" value="F:rRNA binding"/>
    <property type="evidence" value="ECO:0007669"/>
    <property type="project" value="UniProtKB-UniRule"/>
</dbReference>
<dbReference type="GO" id="GO:0003735">
    <property type="term" value="F:structural constituent of ribosome"/>
    <property type="evidence" value="ECO:0007669"/>
    <property type="project" value="InterPro"/>
</dbReference>
<dbReference type="GO" id="GO:0006412">
    <property type="term" value="P:translation"/>
    <property type="evidence" value="ECO:0007669"/>
    <property type="project" value="UniProtKB-UniRule"/>
</dbReference>
<dbReference type="FunFam" id="3.10.430.100:FF:000006">
    <property type="entry name" value="50S ribosomal protein L9"/>
    <property type="match status" value="1"/>
</dbReference>
<dbReference type="FunFam" id="3.40.5.10:FF:000003">
    <property type="entry name" value="50S ribosomal protein L9"/>
    <property type="match status" value="1"/>
</dbReference>
<dbReference type="Gene3D" id="3.10.430.100">
    <property type="entry name" value="Ribosomal protein L9, C-terminal domain"/>
    <property type="match status" value="1"/>
</dbReference>
<dbReference type="Gene3D" id="3.40.5.10">
    <property type="entry name" value="Ribosomal protein L9, N-terminal domain"/>
    <property type="match status" value="1"/>
</dbReference>
<dbReference type="HAMAP" id="MF_00503">
    <property type="entry name" value="Ribosomal_bL9"/>
    <property type="match status" value="1"/>
</dbReference>
<dbReference type="InterPro" id="IPR000244">
    <property type="entry name" value="Ribosomal_bL9"/>
</dbReference>
<dbReference type="InterPro" id="IPR009027">
    <property type="entry name" value="Ribosomal_bL9/RNase_H1_N"/>
</dbReference>
<dbReference type="InterPro" id="IPR020594">
    <property type="entry name" value="Ribosomal_bL9_bac/chp"/>
</dbReference>
<dbReference type="InterPro" id="IPR020069">
    <property type="entry name" value="Ribosomal_bL9_C"/>
</dbReference>
<dbReference type="InterPro" id="IPR036791">
    <property type="entry name" value="Ribosomal_bL9_C_sf"/>
</dbReference>
<dbReference type="InterPro" id="IPR020070">
    <property type="entry name" value="Ribosomal_bL9_N"/>
</dbReference>
<dbReference type="InterPro" id="IPR036935">
    <property type="entry name" value="Ribosomal_bL9_N_sf"/>
</dbReference>
<dbReference type="NCBIfam" id="TIGR00158">
    <property type="entry name" value="L9"/>
    <property type="match status" value="1"/>
</dbReference>
<dbReference type="PANTHER" id="PTHR21368">
    <property type="entry name" value="50S RIBOSOMAL PROTEIN L9"/>
    <property type="match status" value="1"/>
</dbReference>
<dbReference type="Pfam" id="PF03948">
    <property type="entry name" value="Ribosomal_L9_C"/>
    <property type="match status" value="1"/>
</dbReference>
<dbReference type="Pfam" id="PF01281">
    <property type="entry name" value="Ribosomal_L9_N"/>
    <property type="match status" value="1"/>
</dbReference>
<dbReference type="SUPFAM" id="SSF55658">
    <property type="entry name" value="L9 N-domain-like"/>
    <property type="match status" value="1"/>
</dbReference>
<dbReference type="SUPFAM" id="SSF55653">
    <property type="entry name" value="Ribosomal protein L9 C-domain"/>
    <property type="match status" value="1"/>
</dbReference>
<dbReference type="PROSITE" id="PS00651">
    <property type="entry name" value="RIBOSOMAL_L9"/>
    <property type="match status" value="1"/>
</dbReference>